<comment type="function">
    <text>Paramyosin is a major structural component of many thick filaments isolated from invertebrate muscles. It is a prominent antigen in human cysticercosis, may have a role as a modulator of the host immune response. It is able to bind collagen and has complement inhibitor activity.</text>
</comment>
<comment type="subunit">
    <text evidence="2">Homodimer or monomer in secreted form.</text>
</comment>
<comment type="subcellular location">
    <subcellularLocation>
        <location>Cytoplasm</location>
        <location>Myofibril</location>
    </subcellularLocation>
    <subcellularLocation>
        <location>Secreted</location>
    </subcellularLocation>
    <text>Thick filaments of the myofibrils. Can also be secreted.</text>
</comment>
<comment type="similarity">
    <text evidence="2">Belongs to the paramyosin family.</text>
</comment>
<evidence type="ECO:0000255" key="1"/>
<evidence type="ECO:0000305" key="2"/>
<accession>P35418</accession>
<accession>Q962G3</accession>
<keyword id="KW-0175">Coiled coil</keyword>
<keyword id="KW-0963">Cytoplasm</keyword>
<keyword id="KW-0903">Direct protein sequencing</keyword>
<keyword id="KW-0505">Motor protein</keyword>
<keyword id="KW-0514">Muscle protein</keyword>
<keyword id="KW-0518">Myosin</keyword>
<keyword id="KW-0964">Secreted</keyword>
<keyword id="KW-0787">Thick filament</keyword>
<sequence>MSESHVKISRTIIRGTSPSTVRLESRVRELEDLLDLERDARVRAERNANEMSIQLDTMAERLDELSGTSSQTHDAIRRKDMEISKLRKDLENANAAFETAEATLRRKHNTMISEISSEVENLQKQKGRAEKDKSQLMLEIDNVLGQLDGALKAKASAESKLEGLDSQLTRLKALTDDLQRQMADANSAKSRLAAENFELVRVNQEYEAQVVTFSKTKAALESQLDDLKRAMDEDARNRLSLQTQLSSLQMDYDNLQARYEEEAEAAGNLRNQVAKFNADMAALKTRLERELMAKTEEFEELKRKLTVRITELEDMAEHERTRANNLEKTKVKLTLEIKDLQAENEALAAENGELTHRAKQAENLANELQRRIDEMTVEINTLNSANSALEADNMRLKGQVGDLTDRIANLDRENRQLGDQLKETKSALRDANRRLTDLEALRSQLEAERDNLASALHDAEEALKEMEAKYVASQNALNHLKSEMEQRLREKDEELENLRKSTTRTIEELTTTISEMEVRFKSDMSRLKKKYEATISELEVQLDVANKANVNLNRENKTLAQRVQELQAALEDERRAREAAESNLQVSERKRIALASEVEEIRSQLELSDRARKNAESELNDANGRISELTLSVNTLTNDKRRLEGDIGVMQGDLDEAVNARKAAEDRADRLNAEVLRLADELRQEQENYKRAETLRKQLEIEIREITVKLEEAEAFATREGRRMVQKLQNRVRELEAELDGEIRRAKEAFANARKYERQFKELQTQSEDDKRMILELQDLLDKTQIKMKAYKRQLEEQEEVSQLTMSKYRKAQQQIEEAEHRADMAERTITIKRTIGGPGSRAVSVVREINSVSRGNRATSIM</sequence>
<dbReference type="EMBL" id="L13723">
    <property type="protein sequence ID" value="AAA16278.1"/>
    <property type="molecule type" value="Unassigned_DNA"/>
</dbReference>
<dbReference type="EMBL" id="AY034087">
    <property type="protein sequence ID" value="AAK58494.1"/>
    <property type="molecule type" value="Genomic_DNA"/>
</dbReference>
<dbReference type="SMR" id="P35418"/>
<dbReference type="GO" id="GO:0005576">
    <property type="term" value="C:extracellular region"/>
    <property type="evidence" value="ECO:0007669"/>
    <property type="project" value="UniProtKB-SubCell"/>
</dbReference>
<dbReference type="GO" id="GO:0030016">
    <property type="term" value="C:myofibril"/>
    <property type="evidence" value="ECO:0007669"/>
    <property type="project" value="UniProtKB-SubCell"/>
</dbReference>
<dbReference type="GO" id="GO:0016459">
    <property type="term" value="C:myosin complex"/>
    <property type="evidence" value="ECO:0007669"/>
    <property type="project" value="UniProtKB-KW"/>
</dbReference>
<dbReference type="GO" id="GO:0032982">
    <property type="term" value="C:myosin filament"/>
    <property type="evidence" value="ECO:0007669"/>
    <property type="project" value="UniProtKB-KW"/>
</dbReference>
<dbReference type="Gene3D" id="1.20.5.340">
    <property type="match status" value="3"/>
</dbReference>
<dbReference type="Gene3D" id="1.20.5.370">
    <property type="match status" value="1"/>
</dbReference>
<dbReference type="Gene3D" id="1.20.5.1160">
    <property type="entry name" value="Vasodilator-stimulated phosphoprotein"/>
    <property type="match status" value="1"/>
</dbReference>
<dbReference type="InterPro" id="IPR002928">
    <property type="entry name" value="Myosin_tail"/>
</dbReference>
<dbReference type="InterPro" id="IPR014751">
    <property type="entry name" value="XRCC4-like_C"/>
</dbReference>
<dbReference type="PANTHER" id="PTHR46349">
    <property type="entry name" value="CINGULIN-LIKE PROTEIN 1-RELATED"/>
    <property type="match status" value="1"/>
</dbReference>
<dbReference type="PANTHER" id="PTHR46349:SF6">
    <property type="entry name" value="MYOSIN-6-LIKE"/>
    <property type="match status" value="1"/>
</dbReference>
<dbReference type="Pfam" id="PF01576">
    <property type="entry name" value="Myosin_tail_1"/>
    <property type="match status" value="1"/>
</dbReference>
<dbReference type="SUPFAM" id="SSF90257">
    <property type="entry name" value="Myosin rod fragments"/>
    <property type="match status" value="2"/>
</dbReference>
<dbReference type="SUPFAM" id="SSF57997">
    <property type="entry name" value="Tropomyosin"/>
    <property type="match status" value="1"/>
</dbReference>
<feature type="chain" id="PRO_0000211259" description="Paramyosin">
    <location>
        <begin position="1"/>
        <end position="863"/>
    </location>
</feature>
<feature type="region of interest" description="Nonhelical region" evidence="1">
    <location>
        <begin position="1"/>
        <end position="18"/>
    </location>
</feature>
<feature type="region of interest" description="Nonhelical region" evidence="1">
    <location>
        <begin position="837"/>
        <end position="863"/>
    </location>
</feature>
<feature type="coiled-coil region" evidence="1">
    <location>
        <begin position="19"/>
        <end position="836"/>
    </location>
</feature>
<feature type="sequence conflict" description="In Ref. 3; AA sequence." evidence="2" ref="3">
    <original>S</original>
    <variation>Q</variation>
    <location>
        <position position="246"/>
    </location>
</feature>
<feature type="sequence conflict" description="In Ref. 1; AAA16278." evidence="2" ref="1">
    <original>KQ</original>
    <variation>NE</variation>
    <location>
        <begin position="359"/>
        <end position="360"/>
    </location>
</feature>
<feature type="sequence conflict" description="In Ref. 1; AAA16278." evidence="2" ref="1">
    <original>EL</original>
    <variation>DV</variation>
    <location>
        <begin position="738"/>
        <end position="739"/>
    </location>
</feature>
<reference key="1">
    <citation type="journal article" date="1993" name="Mol. Biochem. Parasitol.">
        <title>cDNA cloning and recombinant expression of collagen-binding and complement inhibitor activity of Taenia solium paramyosin (AgB).</title>
        <authorList>
            <person name="Landa A."/>
            <person name="Laclette J.P."/>
            <person name="Nicholson-Weller A."/>
            <person name="Shoemaker C.B."/>
        </authorList>
    </citation>
    <scope>NUCLEOTIDE SEQUENCE</scope>
</reference>
<reference key="2">
    <citation type="journal article" date="2003" name="Parasitol. Res.">
        <title>Gene structure of Taenia solium paramyosin.</title>
        <authorList>
            <person name="Vargas-Parada L."/>
            <person name="Laclette J.P."/>
        </authorList>
    </citation>
    <scope>NUCLEOTIDE SEQUENCE</scope>
</reference>
<reference key="3">
    <citation type="journal article" date="1991" name="Mol. Biochem. Parasitol.">
        <title>Paramyosin is the Schistosoma mansoni (Trematoda) homologue of antigen B from Taenia solium (Cestoda).</title>
        <authorList>
            <person name="Laclette J.P."/>
            <person name="Landa A."/>
            <person name="Arcos L."/>
            <person name="Willms K."/>
            <person name="Davis A.E."/>
            <person name="Shoemaker C.B."/>
        </authorList>
    </citation>
    <scope>PROTEIN SEQUENCE OF 239-256</scope>
</reference>
<organism>
    <name type="scientific">Taenia solium</name>
    <name type="common">Pork tapeworm</name>
    <dbReference type="NCBI Taxonomy" id="6204"/>
    <lineage>
        <taxon>Eukaryota</taxon>
        <taxon>Metazoa</taxon>
        <taxon>Spiralia</taxon>
        <taxon>Lophotrochozoa</taxon>
        <taxon>Platyhelminthes</taxon>
        <taxon>Cestoda</taxon>
        <taxon>Eucestoda</taxon>
        <taxon>Cyclophyllidea</taxon>
        <taxon>Taeniidae</taxon>
        <taxon>Taenia</taxon>
    </lineage>
</organism>
<gene>
    <name type="primary">PMY</name>
</gene>
<protein>
    <recommendedName>
        <fullName>Paramyosin</fullName>
    </recommendedName>
    <alternativeName>
        <fullName>Antigen B</fullName>
        <shortName>AgB</shortName>
    </alternativeName>
</protein>
<name>MYSP_TAESO</name>
<proteinExistence type="evidence at protein level"/>